<name>RSXD_ECO27</name>
<gene>
    <name evidence="1" type="primary">rsxD</name>
    <name type="ordered locus">E2348C_1717</name>
</gene>
<protein>
    <recommendedName>
        <fullName evidence="1">Ion-translocating oxidoreductase complex subunit D</fullName>
        <ecNumber evidence="1">7.-.-.-</ecNumber>
    </recommendedName>
    <alternativeName>
        <fullName evidence="1">Rsx electron transport complex subunit D</fullName>
    </alternativeName>
</protein>
<organism>
    <name type="scientific">Escherichia coli O127:H6 (strain E2348/69 / EPEC)</name>
    <dbReference type="NCBI Taxonomy" id="574521"/>
    <lineage>
        <taxon>Bacteria</taxon>
        <taxon>Pseudomonadati</taxon>
        <taxon>Pseudomonadota</taxon>
        <taxon>Gammaproteobacteria</taxon>
        <taxon>Enterobacterales</taxon>
        <taxon>Enterobacteriaceae</taxon>
        <taxon>Escherichia</taxon>
    </lineage>
</organism>
<evidence type="ECO:0000255" key="1">
    <source>
        <dbReference type="HAMAP-Rule" id="MF_00462"/>
    </source>
</evidence>
<dbReference type="EC" id="7.-.-.-" evidence="1"/>
<dbReference type="EMBL" id="FM180568">
    <property type="protein sequence ID" value="CAS09265.1"/>
    <property type="molecule type" value="Genomic_DNA"/>
</dbReference>
<dbReference type="RefSeq" id="WP_000231945.1">
    <property type="nucleotide sequence ID" value="NC_011601.1"/>
</dbReference>
<dbReference type="SMR" id="B7URX1"/>
<dbReference type="KEGG" id="ecg:E2348C_1717"/>
<dbReference type="HOGENOM" id="CLU_042020_0_0_6"/>
<dbReference type="Proteomes" id="UP000008205">
    <property type="component" value="Chromosome"/>
</dbReference>
<dbReference type="GO" id="GO:0005886">
    <property type="term" value="C:plasma membrane"/>
    <property type="evidence" value="ECO:0007669"/>
    <property type="project" value="UniProtKB-SubCell"/>
</dbReference>
<dbReference type="GO" id="GO:0022900">
    <property type="term" value="P:electron transport chain"/>
    <property type="evidence" value="ECO:0007669"/>
    <property type="project" value="UniProtKB-UniRule"/>
</dbReference>
<dbReference type="GO" id="GO:0055085">
    <property type="term" value="P:transmembrane transport"/>
    <property type="evidence" value="ECO:0007669"/>
    <property type="project" value="InterPro"/>
</dbReference>
<dbReference type="HAMAP" id="MF_00462">
    <property type="entry name" value="RsxD_RnfD"/>
    <property type="match status" value="1"/>
</dbReference>
<dbReference type="InterPro" id="IPR004338">
    <property type="entry name" value="NqrB/RnfD"/>
</dbReference>
<dbReference type="InterPro" id="IPR011303">
    <property type="entry name" value="RnfD_bac"/>
</dbReference>
<dbReference type="NCBIfam" id="NF002011">
    <property type="entry name" value="PRK00816.1"/>
    <property type="match status" value="1"/>
</dbReference>
<dbReference type="NCBIfam" id="TIGR01946">
    <property type="entry name" value="rnfD"/>
    <property type="match status" value="1"/>
</dbReference>
<dbReference type="PANTHER" id="PTHR30578">
    <property type="entry name" value="ELECTRON TRANSPORT COMPLEX PROTEIN RNFD"/>
    <property type="match status" value="1"/>
</dbReference>
<dbReference type="PANTHER" id="PTHR30578:SF0">
    <property type="entry name" value="ION-TRANSLOCATING OXIDOREDUCTASE COMPLEX SUBUNIT D"/>
    <property type="match status" value="1"/>
</dbReference>
<dbReference type="Pfam" id="PF03116">
    <property type="entry name" value="NQR2_RnfD_RnfE"/>
    <property type="match status" value="1"/>
</dbReference>
<proteinExistence type="inferred from homology"/>
<accession>B7URX1</accession>
<feature type="chain" id="PRO_1000191673" description="Ion-translocating oxidoreductase complex subunit D">
    <location>
        <begin position="1"/>
        <end position="352"/>
    </location>
</feature>
<feature type="transmembrane region" description="Helical" evidence="1">
    <location>
        <begin position="20"/>
        <end position="40"/>
    </location>
</feature>
<feature type="transmembrane region" description="Helical" evidence="1">
    <location>
        <begin position="42"/>
        <end position="62"/>
    </location>
</feature>
<feature type="transmembrane region" description="Helical" evidence="1">
    <location>
        <begin position="89"/>
        <end position="109"/>
    </location>
</feature>
<feature type="transmembrane region" description="Helical" evidence="1">
    <location>
        <begin position="123"/>
        <end position="143"/>
    </location>
</feature>
<feature type="transmembrane region" description="Helical" evidence="1">
    <location>
        <begin position="214"/>
        <end position="234"/>
    </location>
</feature>
<feature type="transmembrane region" description="Helical" evidence="1">
    <location>
        <begin position="242"/>
        <end position="262"/>
    </location>
</feature>
<feature type="transmembrane region" description="Helical" evidence="1">
    <location>
        <begin position="267"/>
        <end position="287"/>
    </location>
</feature>
<feature type="transmembrane region" description="Helical" evidence="1">
    <location>
        <begin position="301"/>
        <end position="321"/>
    </location>
</feature>
<feature type="transmembrane region" description="Helical" evidence="1">
    <location>
        <begin position="322"/>
        <end position="342"/>
    </location>
</feature>
<feature type="modified residue" description="FMN phosphoryl threonine" evidence="1">
    <location>
        <position position="187"/>
    </location>
</feature>
<reference key="1">
    <citation type="journal article" date="2009" name="J. Bacteriol.">
        <title>Complete genome sequence and comparative genome analysis of enteropathogenic Escherichia coli O127:H6 strain E2348/69.</title>
        <authorList>
            <person name="Iguchi A."/>
            <person name="Thomson N.R."/>
            <person name="Ogura Y."/>
            <person name="Saunders D."/>
            <person name="Ooka T."/>
            <person name="Henderson I.R."/>
            <person name="Harris D."/>
            <person name="Asadulghani M."/>
            <person name="Kurokawa K."/>
            <person name="Dean P."/>
            <person name="Kenny B."/>
            <person name="Quail M.A."/>
            <person name="Thurston S."/>
            <person name="Dougan G."/>
            <person name="Hayashi T."/>
            <person name="Parkhill J."/>
            <person name="Frankel G."/>
        </authorList>
    </citation>
    <scope>NUCLEOTIDE SEQUENCE [LARGE SCALE GENOMIC DNA]</scope>
    <source>
        <strain>E2348/69 / EPEC</strain>
    </source>
</reference>
<sequence>MVFRIASSPYTHNQRQTSRIMLLVLLAAVPGIAAQLWFFGWGTLVQILLASVSALLAEALVLKLRKQSVAATLKDNSALLTGLLLAVSIPPLAPWWMVVLGTVFAVIIAKQLYGGLGQNPFNPAMIGYVVLLISFPVQMTSWLPPHEIAVNIPGFIDTIQVIFSGHTASGGDMNTLRLGIDGISQATPLDTFKTSVRAGHSVEEIMQYPIYSGILAGAGWQWVNLAWLAGGVWLLWQKAIRWHIPLSFLVTLALCATLGWLFSPDTLAAPQIHLLSGATMLGAFFILTDPVTASTTNRGRLIFGALAGLLVWLIRSFGGYPDGVAFAVLLANITVPLIDYYTRPRVYGHRKG</sequence>
<comment type="function">
    <text evidence="1">Part of a membrane-bound complex that couples electron transfer with translocation of ions across the membrane. Required to maintain the reduced state of SoxR.</text>
</comment>
<comment type="cofactor">
    <cofactor evidence="1">
        <name>FMN</name>
        <dbReference type="ChEBI" id="CHEBI:58210"/>
    </cofactor>
</comment>
<comment type="subunit">
    <text evidence="1">The complex is composed of six subunits: RsxA, RsxB, RsxC, RsxD, RsxE and RsxG.</text>
</comment>
<comment type="subcellular location">
    <subcellularLocation>
        <location evidence="1">Cell inner membrane</location>
        <topology evidence="1">Multi-pass membrane protein</topology>
    </subcellularLocation>
</comment>
<comment type="similarity">
    <text evidence="1">Belongs to the NqrB/RnfD family.</text>
</comment>
<keyword id="KW-0997">Cell inner membrane</keyword>
<keyword id="KW-1003">Cell membrane</keyword>
<keyword id="KW-0249">Electron transport</keyword>
<keyword id="KW-0285">Flavoprotein</keyword>
<keyword id="KW-0288">FMN</keyword>
<keyword id="KW-0472">Membrane</keyword>
<keyword id="KW-0597">Phosphoprotein</keyword>
<keyword id="KW-1185">Reference proteome</keyword>
<keyword id="KW-1278">Translocase</keyword>
<keyword id="KW-0812">Transmembrane</keyword>
<keyword id="KW-1133">Transmembrane helix</keyword>
<keyword id="KW-0813">Transport</keyword>